<proteinExistence type="inferred from homology"/>
<protein>
    <recommendedName>
        <fullName evidence="2">Small ribosomal subunit protein uS12</fullName>
    </recommendedName>
    <alternativeName>
        <fullName evidence="4">30S ribosomal protein S12</fullName>
    </alternativeName>
</protein>
<organism>
    <name type="scientific">Pelotomaculum thermopropionicum (strain DSM 13744 / JCM 10971 / SI)</name>
    <dbReference type="NCBI Taxonomy" id="370438"/>
    <lineage>
        <taxon>Bacteria</taxon>
        <taxon>Bacillati</taxon>
        <taxon>Bacillota</taxon>
        <taxon>Clostridia</taxon>
        <taxon>Eubacteriales</taxon>
        <taxon>Desulfotomaculaceae</taxon>
        <taxon>Pelotomaculum</taxon>
    </lineage>
</organism>
<feature type="chain" id="PRO_1000080405" description="Small ribosomal subunit protein uS12">
    <location>
        <begin position="1"/>
        <end position="124"/>
    </location>
</feature>
<feature type="region of interest" description="Disordered" evidence="3">
    <location>
        <begin position="104"/>
        <end position="124"/>
    </location>
</feature>
<feature type="compositionally biased region" description="Basic residues" evidence="3">
    <location>
        <begin position="111"/>
        <end position="124"/>
    </location>
</feature>
<feature type="modified residue" description="3-methylthioaspartic acid" evidence="1">
    <location>
        <position position="89"/>
    </location>
</feature>
<name>RS12_PELTS</name>
<comment type="function">
    <text evidence="2">With S4 and S5 plays an important role in translational accuracy.</text>
</comment>
<comment type="function">
    <text evidence="2">Interacts with and stabilizes bases of the 16S rRNA that are involved in tRNA selection in the A site and with the mRNA backbone. Located at the interface of the 30S and 50S subunits, it traverses the body of the 30S subunit contacting proteins on the other side and probably holding the rRNA structure together. The combined cluster of proteins S8, S12 and S17 appears to hold together the shoulder and platform of the 30S subunit.</text>
</comment>
<comment type="subunit">
    <text evidence="2">Part of the 30S ribosomal subunit. Contacts proteins S8 and S17. May interact with IF1 in the 30S initiation complex.</text>
</comment>
<comment type="similarity">
    <text evidence="2">Belongs to the universal ribosomal protein uS12 family.</text>
</comment>
<dbReference type="EMBL" id="AP009389">
    <property type="protein sequence ID" value="BAF58496.1"/>
    <property type="molecule type" value="Genomic_DNA"/>
</dbReference>
<dbReference type="SMR" id="A5D5I5"/>
<dbReference type="STRING" id="370438.PTH_0315"/>
<dbReference type="KEGG" id="pth:PTH_0315"/>
<dbReference type="eggNOG" id="COG0048">
    <property type="taxonomic scope" value="Bacteria"/>
</dbReference>
<dbReference type="HOGENOM" id="CLU_104295_1_2_9"/>
<dbReference type="Proteomes" id="UP000006556">
    <property type="component" value="Chromosome"/>
</dbReference>
<dbReference type="GO" id="GO:0015935">
    <property type="term" value="C:small ribosomal subunit"/>
    <property type="evidence" value="ECO:0007669"/>
    <property type="project" value="InterPro"/>
</dbReference>
<dbReference type="GO" id="GO:0019843">
    <property type="term" value="F:rRNA binding"/>
    <property type="evidence" value="ECO:0007669"/>
    <property type="project" value="UniProtKB-UniRule"/>
</dbReference>
<dbReference type="GO" id="GO:0003735">
    <property type="term" value="F:structural constituent of ribosome"/>
    <property type="evidence" value="ECO:0007669"/>
    <property type="project" value="InterPro"/>
</dbReference>
<dbReference type="GO" id="GO:0000049">
    <property type="term" value="F:tRNA binding"/>
    <property type="evidence" value="ECO:0007669"/>
    <property type="project" value="UniProtKB-UniRule"/>
</dbReference>
<dbReference type="GO" id="GO:0006412">
    <property type="term" value="P:translation"/>
    <property type="evidence" value="ECO:0007669"/>
    <property type="project" value="UniProtKB-UniRule"/>
</dbReference>
<dbReference type="CDD" id="cd03368">
    <property type="entry name" value="Ribosomal_S12"/>
    <property type="match status" value="1"/>
</dbReference>
<dbReference type="FunFam" id="2.40.50.140:FF:000001">
    <property type="entry name" value="30S ribosomal protein S12"/>
    <property type="match status" value="1"/>
</dbReference>
<dbReference type="Gene3D" id="2.40.50.140">
    <property type="entry name" value="Nucleic acid-binding proteins"/>
    <property type="match status" value="1"/>
</dbReference>
<dbReference type="HAMAP" id="MF_00403_B">
    <property type="entry name" value="Ribosomal_uS12_B"/>
    <property type="match status" value="1"/>
</dbReference>
<dbReference type="InterPro" id="IPR012340">
    <property type="entry name" value="NA-bd_OB-fold"/>
</dbReference>
<dbReference type="InterPro" id="IPR006032">
    <property type="entry name" value="Ribosomal_uS12"/>
</dbReference>
<dbReference type="InterPro" id="IPR005679">
    <property type="entry name" value="Ribosomal_uS12_bac"/>
</dbReference>
<dbReference type="NCBIfam" id="TIGR00981">
    <property type="entry name" value="rpsL_bact"/>
    <property type="match status" value="1"/>
</dbReference>
<dbReference type="PANTHER" id="PTHR11652">
    <property type="entry name" value="30S RIBOSOMAL PROTEIN S12 FAMILY MEMBER"/>
    <property type="match status" value="1"/>
</dbReference>
<dbReference type="Pfam" id="PF00164">
    <property type="entry name" value="Ribosom_S12_S23"/>
    <property type="match status" value="1"/>
</dbReference>
<dbReference type="PIRSF" id="PIRSF002133">
    <property type="entry name" value="Ribosomal_S12/S23"/>
    <property type="match status" value="1"/>
</dbReference>
<dbReference type="PRINTS" id="PR01034">
    <property type="entry name" value="RIBOSOMALS12"/>
</dbReference>
<dbReference type="SUPFAM" id="SSF50249">
    <property type="entry name" value="Nucleic acid-binding proteins"/>
    <property type="match status" value="1"/>
</dbReference>
<dbReference type="PROSITE" id="PS00055">
    <property type="entry name" value="RIBOSOMAL_S12"/>
    <property type="match status" value="1"/>
</dbReference>
<evidence type="ECO:0000250" key="1"/>
<evidence type="ECO:0000255" key="2">
    <source>
        <dbReference type="HAMAP-Rule" id="MF_00403"/>
    </source>
</evidence>
<evidence type="ECO:0000256" key="3">
    <source>
        <dbReference type="SAM" id="MobiDB-lite"/>
    </source>
</evidence>
<evidence type="ECO:0000305" key="4"/>
<reference key="1">
    <citation type="journal article" date="2008" name="Genome Res.">
        <title>The genome of Pelotomaculum thermopropionicum reveals niche-associated evolution in anaerobic microbiota.</title>
        <authorList>
            <person name="Kosaka T."/>
            <person name="Kato S."/>
            <person name="Shimoyama T."/>
            <person name="Ishii S."/>
            <person name="Abe T."/>
            <person name="Watanabe K."/>
        </authorList>
    </citation>
    <scope>NUCLEOTIDE SEQUENCE [LARGE SCALE GENOMIC DNA]</scope>
    <source>
        <strain>DSM 13744 / JCM 10971 / SI</strain>
    </source>
</reference>
<accession>A5D5I5</accession>
<sequence length="124" mass="13709">MPTISQLIRKGREEAVKKSAAPALKECPQKRGVCTRVYTTTPKKPNSALRKVARVRLTNGIEVTSYIPGIGHNLQEHSVVLVRGGRVKDLPGVRYHIVRGALDSAGVQNRNRGRSKYGTKRPKK</sequence>
<keyword id="KW-0488">Methylation</keyword>
<keyword id="KW-1185">Reference proteome</keyword>
<keyword id="KW-0687">Ribonucleoprotein</keyword>
<keyword id="KW-0689">Ribosomal protein</keyword>
<keyword id="KW-0694">RNA-binding</keyword>
<keyword id="KW-0699">rRNA-binding</keyword>
<keyword id="KW-0820">tRNA-binding</keyword>
<gene>
    <name evidence="2" type="primary">rpsL</name>
    <name type="ordered locus">PTH_0315</name>
</gene>